<feature type="chain" id="PRO_1000100099" description="Shikimate dehydrogenase (NADP(+))">
    <location>
        <begin position="1"/>
        <end position="274"/>
    </location>
</feature>
<feature type="active site" description="Proton acceptor" evidence="1">
    <location>
        <position position="65"/>
    </location>
</feature>
<feature type="binding site" evidence="1">
    <location>
        <begin position="14"/>
        <end position="16"/>
    </location>
    <ligand>
        <name>shikimate</name>
        <dbReference type="ChEBI" id="CHEBI:36208"/>
    </ligand>
</feature>
<feature type="binding site" evidence="1">
    <location>
        <position position="61"/>
    </location>
    <ligand>
        <name>shikimate</name>
        <dbReference type="ChEBI" id="CHEBI:36208"/>
    </ligand>
</feature>
<feature type="binding site" evidence="1">
    <location>
        <position position="77"/>
    </location>
    <ligand>
        <name>NADP(+)</name>
        <dbReference type="ChEBI" id="CHEBI:58349"/>
    </ligand>
</feature>
<feature type="binding site" evidence="1">
    <location>
        <position position="86"/>
    </location>
    <ligand>
        <name>shikimate</name>
        <dbReference type="ChEBI" id="CHEBI:36208"/>
    </ligand>
</feature>
<feature type="binding site" evidence="1">
    <location>
        <position position="102"/>
    </location>
    <ligand>
        <name>shikimate</name>
        <dbReference type="ChEBI" id="CHEBI:36208"/>
    </ligand>
</feature>
<feature type="binding site" evidence="1">
    <location>
        <begin position="126"/>
        <end position="130"/>
    </location>
    <ligand>
        <name>NADP(+)</name>
        <dbReference type="ChEBI" id="CHEBI:58349"/>
    </ligand>
</feature>
<feature type="binding site" evidence="1">
    <location>
        <begin position="149"/>
        <end position="154"/>
    </location>
    <ligand>
        <name>NADP(+)</name>
        <dbReference type="ChEBI" id="CHEBI:58349"/>
    </ligand>
</feature>
<feature type="binding site" evidence="1">
    <location>
        <position position="212"/>
    </location>
    <ligand>
        <name>NADP(+)</name>
        <dbReference type="ChEBI" id="CHEBI:58349"/>
    </ligand>
</feature>
<feature type="binding site" evidence="1">
    <location>
        <position position="214"/>
    </location>
    <ligand>
        <name>shikimate</name>
        <dbReference type="ChEBI" id="CHEBI:36208"/>
    </ligand>
</feature>
<feature type="binding site" evidence="1">
    <location>
        <position position="237"/>
    </location>
    <ligand>
        <name>NADP(+)</name>
        <dbReference type="ChEBI" id="CHEBI:58349"/>
    </ligand>
</feature>
<keyword id="KW-0028">Amino-acid biosynthesis</keyword>
<keyword id="KW-0057">Aromatic amino acid biosynthesis</keyword>
<keyword id="KW-0521">NADP</keyword>
<keyword id="KW-0560">Oxidoreductase</keyword>
<organism>
    <name type="scientific">Actinobacillus pleuropneumoniae serotype 7 (strain AP76)</name>
    <dbReference type="NCBI Taxonomy" id="537457"/>
    <lineage>
        <taxon>Bacteria</taxon>
        <taxon>Pseudomonadati</taxon>
        <taxon>Pseudomonadota</taxon>
        <taxon>Gammaproteobacteria</taxon>
        <taxon>Pasteurellales</taxon>
        <taxon>Pasteurellaceae</taxon>
        <taxon>Actinobacillus</taxon>
    </lineage>
</organism>
<protein>
    <recommendedName>
        <fullName evidence="1">Shikimate dehydrogenase (NADP(+))</fullName>
        <shortName evidence="1">SDH</shortName>
        <ecNumber evidence="1">1.1.1.25</ecNumber>
    </recommendedName>
</protein>
<proteinExistence type="inferred from homology"/>
<gene>
    <name evidence="1" type="primary">aroE</name>
    <name type="ordered locus">APP7_1197</name>
</gene>
<evidence type="ECO:0000255" key="1">
    <source>
        <dbReference type="HAMAP-Rule" id="MF_00222"/>
    </source>
</evidence>
<name>AROE_ACTP7</name>
<sequence length="274" mass="30546">MNQYAVWGNPIAQSKSPRIHQLFGEQTGKSISYVAKLGNELNFENELMQFFAEGAKGANITAPFKERAFSLADEYSESCLLAEACNTLKRLDDGRLYADNTDGFGLCSDLERLGWLKPHQRVLILGAGGATKGVLFPLLKAKQQITIYNRTLEKAVRLAEKFAKYGKIRTASLEQIAEQQFDLIINATSLGLQGKYVPVAAHLLKSAAVYDMQYAPDMQTPFLNYARECGAVRYQDGLGMLVGQAGFAFKLWENEFPNVEKVLKQLKNEMENAK</sequence>
<dbReference type="EC" id="1.1.1.25" evidence="1"/>
<dbReference type="EMBL" id="CP001091">
    <property type="protein sequence ID" value="ACE61849.1"/>
    <property type="molecule type" value="Genomic_DNA"/>
</dbReference>
<dbReference type="RefSeq" id="WP_005601621.1">
    <property type="nucleotide sequence ID" value="NC_010939.1"/>
</dbReference>
<dbReference type="SMR" id="B3GY26"/>
<dbReference type="KEGG" id="apa:APP7_1197"/>
<dbReference type="HOGENOM" id="CLU_044063_2_1_6"/>
<dbReference type="UniPathway" id="UPA00053">
    <property type="reaction ID" value="UER00087"/>
</dbReference>
<dbReference type="Proteomes" id="UP000001226">
    <property type="component" value="Chromosome"/>
</dbReference>
<dbReference type="GO" id="GO:0005829">
    <property type="term" value="C:cytosol"/>
    <property type="evidence" value="ECO:0007669"/>
    <property type="project" value="TreeGrafter"/>
</dbReference>
<dbReference type="GO" id="GO:0050661">
    <property type="term" value="F:NADP binding"/>
    <property type="evidence" value="ECO:0007669"/>
    <property type="project" value="InterPro"/>
</dbReference>
<dbReference type="GO" id="GO:0004764">
    <property type="term" value="F:shikimate 3-dehydrogenase (NADP+) activity"/>
    <property type="evidence" value="ECO:0007669"/>
    <property type="project" value="UniProtKB-UniRule"/>
</dbReference>
<dbReference type="GO" id="GO:0008652">
    <property type="term" value="P:amino acid biosynthetic process"/>
    <property type="evidence" value="ECO:0007669"/>
    <property type="project" value="UniProtKB-KW"/>
</dbReference>
<dbReference type="GO" id="GO:0009073">
    <property type="term" value="P:aromatic amino acid family biosynthetic process"/>
    <property type="evidence" value="ECO:0007669"/>
    <property type="project" value="UniProtKB-KW"/>
</dbReference>
<dbReference type="GO" id="GO:0009423">
    <property type="term" value="P:chorismate biosynthetic process"/>
    <property type="evidence" value="ECO:0007669"/>
    <property type="project" value="UniProtKB-UniRule"/>
</dbReference>
<dbReference type="GO" id="GO:0019632">
    <property type="term" value="P:shikimate metabolic process"/>
    <property type="evidence" value="ECO:0007669"/>
    <property type="project" value="InterPro"/>
</dbReference>
<dbReference type="CDD" id="cd01065">
    <property type="entry name" value="NAD_bind_Shikimate_DH"/>
    <property type="match status" value="1"/>
</dbReference>
<dbReference type="FunFam" id="3.40.50.10860:FF:000006">
    <property type="entry name" value="Shikimate dehydrogenase (NADP(+))"/>
    <property type="match status" value="1"/>
</dbReference>
<dbReference type="Gene3D" id="3.40.50.10860">
    <property type="entry name" value="Leucine Dehydrogenase, chain A, domain 1"/>
    <property type="match status" value="1"/>
</dbReference>
<dbReference type="Gene3D" id="3.40.50.720">
    <property type="entry name" value="NAD(P)-binding Rossmann-like Domain"/>
    <property type="match status" value="1"/>
</dbReference>
<dbReference type="HAMAP" id="MF_00222">
    <property type="entry name" value="Shikimate_DH_AroE"/>
    <property type="match status" value="1"/>
</dbReference>
<dbReference type="InterPro" id="IPR046346">
    <property type="entry name" value="Aminoacid_DH-like_N_sf"/>
</dbReference>
<dbReference type="InterPro" id="IPR036291">
    <property type="entry name" value="NAD(P)-bd_dom_sf"/>
</dbReference>
<dbReference type="InterPro" id="IPR011342">
    <property type="entry name" value="Shikimate_DH"/>
</dbReference>
<dbReference type="InterPro" id="IPR013708">
    <property type="entry name" value="Shikimate_DH-bd_N"/>
</dbReference>
<dbReference type="InterPro" id="IPR022893">
    <property type="entry name" value="Shikimate_DH_fam"/>
</dbReference>
<dbReference type="InterPro" id="IPR006151">
    <property type="entry name" value="Shikm_DH/Glu-tRNA_Rdtase"/>
</dbReference>
<dbReference type="NCBIfam" id="TIGR00507">
    <property type="entry name" value="aroE"/>
    <property type="match status" value="1"/>
</dbReference>
<dbReference type="NCBIfam" id="NF001310">
    <property type="entry name" value="PRK00258.1-2"/>
    <property type="match status" value="1"/>
</dbReference>
<dbReference type="PANTHER" id="PTHR21089:SF1">
    <property type="entry name" value="BIFUNCTIONAL 3-DEHYDROQUINATE DEHYDRATASE_SHIKIMATE DEHYDROGENASE, CHLOROPLASTIC"/>
    <property type="match status" value="1"/>
</dbReference>
<dbReference type="PANTHER" id="PTHR21089">
    <property type="entry name" value="SHIKIMATE DEHYDROGENASE"/>
    <property type="match status" value="1"/>
</dbReference>
<dbReference type="Pfam" id="PF01488">
    <property type="entry name" value="Shikimate_DH"/>
    <property type="match status" value="1"/>
</dbReference>
<dbReference type="Pfam" id="PF08501">
    <property type="entry name" value="Shikimate_dh_N"/>
    <property type="match status" value="1"/>
</dbReference>
<dbReference type="SUPFAM" id="SSF53223">
    <property type="entry name" value="Aminoacid dehydrogenase-like, N-terminal domain"/>
    <property type="match status" value="1"/>
</dbReference>
<dbReference type="SUPFAM" id="SSF51735">
    <property type="entry name" value="NAD(P)-binding Rossmann-fold domains"/>
    <property type="match status" value="1"/>
</dbReference>
<comment type="function">
    <text evidence="1">Involved in the biosynthesis of the chorismate, which leads to the biosynthesis of aromatic amino acids. Catalyzes the reversible NADPH linked reduction of 3-dehydroshikimate (DHSA) to yield shikimate (SA).</text>
</comment>
<comment type="catalytic activity">
    <reaction evidence="1">
        <text>shikimate + NADP(+) = 3-dehydroshikimate + NADPH + H(+)</text>
        <dbReference type="Rhea" id="RHEA:17737"/>
        <dbReference type="ChEBI" id="CHEBI:15378"/>
        <dbReference type="ChEBI" id="CHEBI:16630"/>
        <dbReference type="ChEBI" id="CHEBI:36208"/>
        <dbReference type="ChEBI" id="CHEBI:57783"/>
        <dbReference type="ChEBI" id="CHEBI:58349"/>
        <dbReference type="EC" id="1.1.1.25"/>
    </reaction>
</comment>
<comment type="pathway">
    <text evidence="1">Metabolic intermediate biosynthesis; chorismate biosynthesis; chorismate from D-erythrose 4-phosphate and phosphoenolpyruvate: step 4/7.</text>
</comment>
<comment type="subunit">
    <text evidence="1">Homodimer.</text>
</comment>
<comment type="similarity">
    <text evidence="1">Belongs to the shikimate dehydrogenase family.</text>
</comment>
<accession>B3GY26</accession>
<reference key="1">
    <citation type="submission" date="2008-06" db="EMBL/GenBank/DDBJ databases">
        <title>Genome and proteome analysis of A. pleuropneumoniae serotype 7.</title>
        <authorList>
            <person name="Linke B."/>
            <person name="Buettner F."/>
            <person name="Martinez-Arias R."/>
            <person name="Goesmann A."/>
            <person name="Baltes N."/>
            <person name="Tegetmeyer H."/>
            <person name="Singh M."/>
            <person name="Gerlach G.F."/>
        </authorList>
    </citation>
    <scope>NUCLEOTIDE SEQUENCE [LARGE SCALE GENOMIC DNA]</scope>
    <source>
        <strain>AP76</strain>
    </source>
</reference>